<keyword id="KW-0066">ATP synthesis</keyword>
<keyword id="KW-0997">Cell inner membrane</keyword>
<keyword id="KW-1003">Cell membrane</keyword>
<keyword id="KW-0138">CF(0)</keyword>
<keyword id="KW-0375">Hydrogen ion transport</keyword>
<keyword id="KW-0406">Ion transport</keyword>
<keyword id="KW-0446">Lipid-binding</keyword>
<keyword id="KW-0472">Membrane</keyword>
<keyword id="KW-1185">Reference proteome</keyword>
<keyword id="KW-0812">Transmembrane</keyword>
<keyword id="KW-1133">Transmembrane helix</keyword>
<keyword id="KW-0813">Transport</keyword>
<name>ATPL_GEOMG</name>
<feature type="chain" id="PRO_0000365885" description="ATP synthase subunit c">
    <location>
        <begin position="1"/>
        <end position="91"/>
    </location>
</feature>
<feature type="transmembrane region" description="Helical" evidence="1">
    <location>
        <begin position="4"/>
        <end position="24"/>
    </location>
</feature>
<feature type="transmembrane region" description="Helical" evidence="1">
    <location>
        <begin position="53"/>
        <end position="73"/>
    </location>
</feature>
<feature type="site" description="Reversibly protonated during proton transport" evidence="1">
    <location>
        <position position="59"/>
    </location>
</feature>
<proteinExistence type="inferred from homology"/>
<gene>
    <name evidence="1" type="primary">atpE</name>
    <name type="ordered locus">Gmet_3360</name>
</gene>
<reference key="1">
    <citation type="journal article" date="2009" name="BMC Microbiol.">
        <title>The genome sequence of Geobacter metallireducens: features of metabolism, physiology and regulation common and dissimilar to Geobacter sulfurreducens.</title>
        <authorList>
            <person name="Aklujkar M."/>
            <person name="Krushkal J."/>
            <person name="DiBartolo G."/>
            <person name="Lapidus A."/>
            <person name="Land M.L."/>
            <person name="Lovley D.R."/>
        </authorList>
    </citation>
    <scope>NUCLEOTIDE SEQUENCE [LARGE SCALE GENOMIC DNA]</scope>
    <source>
        <strain>ATCC 53774 / DSM 7210 / GS-15</strain>
    </source>
</reference>
<dbReference type="EMBL" id="CP000148">
    <property type="protein sequence ID" value="ABB33572.1"/>
    <property type="molecule type" value="Genomic_DNA"/>
</dbReference>
<dbReference type="RefSeq" id="WP_004512586.1">
    <property type="nucleotide sequence ID" value="NC_007517.1"/>
</dbReference>
<dbReference type="SMR" id="Q39QA2"/>
<dbReference type="STRING" id="269799.Gmet_3360"/>
<dbReference type="KEGG" id="gme:Gmet_3360"/>
<dbReference type="eggNOG" id="COG0636">
    <property type="taxonomic scope" value="Bacteria"/>
</dbReference>
<dbReference type="HOGENOM" id="CLU_148047_2_0_7"/>
<dbReference type="Proteomes" id="UP000007073">
    <property type="component" value="Chromosome"/>
</dbReference>
<dbReference type="GO" id="GO:0005886">
    <property type="term" value="C:plasma membrane"/>
    <property type="evidence" value="ECO:0007669"/>
    <property type="project" value="UniProtKB-SubCell"/>
</dbReference>
<dbReference type="GO" id="GO:0045259">
    <property type="term" value="C:proton-transporting ATP synthase complex"/>
    <property type="evidence" value="ECO:0007669"/>
    <property type="project" value="UniProtKB-KW"/>
</dbReference>
<dbReference type="GO" id="GO:0033177">
    <property type="term" value="C:proton-transporting two-sector ATPase complex, proton-transporting domain"/>
    <property type="evidence" value="ECO:0007669"/>
    <property type="project" value="InterPro"/>
</dbReference>
<dbReference type="GO" id="GO:0008289">
    <property type="term" value="F:lipid binding"/>
    <property type="evidence" value="ECO:0007669"/>
    <property type="project" value="UniProtKB-KW"/>
</dbReference>
<dbReference type="GO" id="GO:0046933">
    <property type="term" value="F:proton-transporting ATP synthase activity, rotational mechanism"/>
    <property type="evidence" value="ECO:0007669"/>
    <property type="project" value="UniProtKB-UniRule"/>
</dbReference>
<dbReference type="CDD" id="cd18121">
    <property type="entry name" value="ATP-synt_Fo_c"/>
    <property type="match status" value="1"/>
</dbReference>
<dbReference type="FunFam" id="1.20.120.610:FF:000006">
    <property type="entry name" value="ATP synthase subunit c"/>
    <property type="match status" value="1"/>
</dbReference>
<dbReference type="FunFam" id="1.20.20.10:FF:000002">
    <property type="entry name" value="ATP synthase subunit c"/>
    <property type="match status" value="1"/>
</dbReference>
<dbReference type="Gene3D" id="1.20.120.610">
    <property type="entry name" value="lithium bound rotor ring of v- atpase"/>
    <property type="match status" value="1"/>
</dbReference>
<dbReference type="HAMAP" id="MF_01396">
    <property type="entry name" value="ATP_synth_c_bact"/>
    <property type="match status" value="1"/>
</dbReference>
<dbReference type="InterPro" id="IPR005953">
    <property type="entry name" value="ATP_synth_csu_bac/chlpt"/>
</dbReference>
<dbReference type="InterPro" id="IPR000454">
    <property type="entry name" value="ATP_synth_F0_csu"/>
</dbReference>
<dbReference type="InterPro" id="IPR020537">
    <property type="entry name" value="ATP_synth_F0_csu_DDCD_BS"/>
</dbReference>
<dbReference type="InterPro" id="IPR002379">
    <property type="entry name" value="ATPase_proteolipid_c-like_dom"/>
</dbReference>
<dbReference type="InterPro" id="IPR035921">
    <property type="entry name" value="F/V-ATP_Csub_sf"/>
</dbReference>
<dbReference type="NCBIfam" id="TIGR01260">
    <property type="entry name" value="ATP_synt_c"/>
    <property type="match status" value="1"/>
</dbReference>
<dbReference type="PANTHER" id="PTHR10031">
    <property type="entry name" value="ATP SYNTHASE LIPID-BINDING PROTEIN, MITOCHONDRIAL"/>
    <property type="match status" value="1"/>
</dbReference>
<dbReference type="PANTHER" id="PTHR10031:SF0">
    <property type="entry name" value="ATPASE PROTEIN 9"/>
    <property type="match status" value="1"/>
</dbReference>
<dbReference type="Pfam" id="PF00137">
    <property type="entry name" value="ATP-synt_C"/>
    <property type="match status" value="1"/>
</dbReference>
<dbReference type="PRINTS" id="PR00124">
    <property type="entry name" value="ATPASEC"/>
</dbReference>
<dbReference type="SUPFAM" id="SSF81333">
    <property type="entry name" value="F1F0 ATP synthase subunit C"/>
    <property type="match status" value="1"/>
</dbReference>
<dbReference type="PROSITE" id="PS00605">
    <property type="entry name" value="ATPASE_C"/>
    <property type="match status" value="1"/>
</dbReference>
<organism>
    <name type="scientific">Geobacter metallireducens (strain ATCC 53774 / DSM 7210 / GS-15)</name>
    <dbReference type="NCBI Taxonomy" id="269799"/>
    <lineage>
        <taxon>Bacteria</taxon>
        <taxon>Pseudomonadati</taxon>
        <taxon>Thermodesulfobacteriota</taxon>
        <taxon>Desulfuromonadia</taxon>
        <taxon>Geobacterales</taxon>
        <taxon>Geobacteraceae</taxon>
        <taxon>Geobacter</taxon>
    </lineage>
</organism>
<comment type="function">
    <text evidence="1">F(1)F(0) ATP synthase produces ATP from ADP in the presence of a proton or sodium gradient. F-type ATPases consist of two structural domains, F(1) containing the extramembraneous catalytic core and F(0) containing the membrane proton channel, linked together by a central stalk and a peripheral stalk. During catalysis, ATP synthesis in the catalytic domain of F(1) is coupled via a rotary mechanism of the central stalk subunits to proton translocation.</text>
</comment>
<comment type="function">
    <text evidence="1">Key component of the F(0) channel; it plays a direct role in translocation across the membrane. A homomeric c-ring of between 10-14 subunits forms the central stalk rotor element with the F(1) delta and epsilon subunits.</text>
</comment>
<comment type="subunit">
    <text evidence="1">F-type ATPases have 2 components, F(1) - the catalytic core - and F(0) - the membrane proton channel. F(1) has five subunits: alpha(3), beta(3), gamma(1), delta(1), epsilon(1). F(0) has three main subunits: a(1), b(2) and c(10-14). The alpha and beta chains form an alternating ring which encloses part of the gamma chain. F(1) is attached to F(0) by a central stalk formed by the gamma and epsilon chains, while a peripheral stalk is formed by the delta and b chains.</text>
</comment>
<comment type="subcellular location">
    <subcellularLocation>
        <location evidence="1">Cell inner membrane</location>
        <topology evidence="1">Multi-pass membrane protein</topology>
    </subcellularLocation>
</comment>
<comment type="similarity">
    <text evidence="1">Belongs to the ATPase C chain family.</text>
</comment>
<evidence type="ECO:0000255" key="1">
    <source>
        <dbReference type="HAMAP-Rule" id="MF_01396"/>
    </source>
</evidence>
<protein>
    <recommendedName>
        <fullName evidence="1">ATP synthase subunit c</fullName>
    </recommendedName>
    <alternativeName>
        <fullName evidence="1">ATP synthase F(0) sector subunit c</fullName>
    </alternativeName>
    <alternativeName>
        <fullName evidence="1">F-type ATPase subunit c</fullName>
        <shortName evidence="1">F-ATPase subunit c</shortName>
    </alternativeName>
    <alternativeName>
        <fullName evidence="1">Lipid-binding protein</fullName>
    </alternativeName>
</protein>
<sequence length="91" mass="9371">MDFLTMCMLAAGFGMAIGAFGTGIGQGLAVKSAVEGVSRNPGASGKILTTMMIGLAMIESLAIYVLVVCLIILFANPYKDVAIKLAETVAK</sequence>
<accession>Q39QA2</accession>